<comment type="function">
    <text evidence="1">Inner capsid protein that self-assembles to form an icosahedral capsid with a T=2 symmetry, which consists of 120 copies of VP2, with channels at each of its five-fold vertices. This capsid constitutes the innermost concentric layer of the viral mature particle. It encapsidates the polymerase VP1, the capping enzyme VP3 and the genomic dsRNA, thereby defining the core. The innermost VP2 capsid and the intermediate VP6 capsid remain intact following cell entry to protect the dsRNA from degradation and to prevent unfavorable antiviral responses in the host cell during all the replication cycle of the virus. Nascent transcripts are transcribed within the structural confines of this double-layered particle (DLP) and are extruded through the channels formed by VP2 N-termini. VP2 is required for the replicase activity of VP1 polymerase. Probably recruits a copy of a VP1-VP3 complex, potentially along with a segment of plus-strand RNA, as a decamer of VP2 assembles. May activate the autoinhibited VP1/RNA complex to coordinate packaging and genome replication.</text>
</comment>
<comment type="subunit">
    <text evidence="1">Homodecamer; each decamer is made up of two conformers of VP2, called VP2A and VP2B. Interacts with a VP1-VP3 complex. Interacts with the intermediate capsid protein VP6. Interacts with NSP5. Interacts (via N-terminus) with NSP2.</text>
</comment>
<comment type="subcellular location">
    <subcellularLocation>
        <location evidence="1">Virion</location>
    </subcellularLocation>
    <text evidence="1">Inner capsid protein. Also found in spherical cytoplasmic structures, called virus factories, that appear early after infection and are the site of viral replication and packaging.</text>
</comment>
<comment type="domain">
    <text evidence="1">The N-terminus binds RNA. It is necessary for encapsidation of VP1 and VP3. The N-termini of 10 VP2 molecules form a cylindrical hub underneath each 5-fold axis of the inner capsid.</text>
</comment>
<comment type="PTM">
    <text evidence="1">Sumoylated with SUMO1 and SUMO2. Sumoylation of viral proteins seems to have a positive role on viral replication.</text>
</comment>
<comment type="similarity">
    <text evidence="1">Belongs to the rotavirus VP2 family.</text>
</comment>
<name>VP2_ROTTU</name>
<protein>
    <recommendedName>
        <fullName evidence="1">Inner capsid protein VP2</fullName>
    </recommendedName>
</protein>
<feature type="chain" id="PRO_0000368052" description="Inner capsid protein VP2">
    <location>
        <begin position="1"/>
        <end position="887"/>
    </location>
</feature>
<feature type="region of interest" description="5-fold hub; involved in the encapsidation of VP1 and VP3" evidence="1">
    <location>
        <begin position="1"/>
        <end position="87"/>
    </location>
</feature>
<feature type="region of interest" description="Disordered" evidence="2">
    <location>
        <begin position="1"/>
        <end position="46"/>
    </location>
</feature>
<feature type="region of interest" description="Hydrophobic" evidence="1">
    <location>
        <begin position="401"/>
        <end position="421"/>
    </location>
</feature>
<feature type="region of interest" description="Hydrophobic" evidence="1">
    <location>
        <begin position="429"/>
        <end position="449"/>
    </location>
</feature>
<feature type="compositionally biased region" description="Basic and acidic residues" evidence="2">
    <location>
        <begin position="9"/>
        <end position="27"/>
    </location>
</feature>
<feature type="compositionally biased region" description="Polar residues" evidence="2">
    <location>
        <begin position="28"/>
        <end position="44"/>
    </location>
</feature>
<feature type="site" description="Interaction with the intermediate capsid protein VP6" evidence="1">
    <location>
        <position position="231"/>
    </location>
</feature>
<feature type="site" description="Interaction with the intermediate capsid protein VP6" evidence="1">
    <location>
        <position position="235"/>
    </location>
</feature>
<feature type="site" description="Interaction with the intermediate capsid protein VP6" evidence="1">
    <location>
        <position position="846"/>
    </location>
</feature>
<feature type="site" description="Interaction with the intermediate capsid protein VP6" evidence="1">
    <location>
        <position position="848"/>
    </location>
</feature>
<accession>B3F2X6</accession>
<evidence type="ECO:0000255" key="1">
    <source>
        <dbReference type="HAMAP-Rule" id="MF_04127"/>
    </source>
</evidence>
<evidence type="ECO:0000256" key="2">
    <source>
        <dbReference type="SAM" id="MobiDB-lite"/>
    </source>
</evidence>
<sequence length="887" mass="103364">MAYRKRGARRETNLKQDDRMQEKEENKNITNSIENKSTAKTQLSEKVLSQKEEIITDNQEEVKIADEVRKSNKEESKQLLEVLKTKEEHQKEVQYEILQKTIPTFEPKESILKKLEDIKPEQAKKQTKLFRIFEPKQLPIYRANGERELRNRWYWKLKRDTLPDGDYDVREYFLNLYDQVLTEMPDYLLLKDMAVENKNSRDAGKVVDSETAAICDAIFQDEETEGVVRRFIAEMRQRVQADRNVVNYPSILHPIDHAFNEYFLQHQLVEPLNNDIIFNYIPERIRNDVNYILNMDRNLPSTARYIRPNLLQDRLNLHDNFESLWDTITTSNYILARSVVPDLKELVSTEAQIQKMSQDLQLEALTIQSETQFLTGINSQAANDCFKTLIAAMLSQRTMSLDFVTTNYMSLISGMWLLTVVPNDMFIRESLVACQLAIINTIIYPAFGMQRMHYRNGDPQTPFQIAEQQIQNFQVANWLHFVNNNQFRQVVIDGVLNQVLNDNIRNGHVINQLMEALMQLSRQQFPTMPVDYKRSIQRGILLLSNRLGQLVDLTRLLAYNYETLMACITMNMQHMQTLTTEKLQLTSVTSLCMLIGNATVIPSPQTLFHYYNVNVNFHSNYNERINDAVAIITAANRLNLYQKKMKSIVEDFLKRLQIFDVSRVPDDQMYRLRDRLRLLPVEIRRLDIFNLILMNMEQIERASDKIAQGVIIAYRDMQLERDEMYGYVNIARNLDGFQQINLEELMRTGDYAQITNMLLNNQPVALVGALPFITDSSVISLIAKLDATVFAQIVKLRKVDTLKPILYKINSDSNDFYLVANYDWIPTSTTKVYKQVPQQFDFRASMHMLTSNLTFTVYSDLLAFVSADTVEPINAVAFDNMRIMNEL</sequence>
<organism>
    <name type="scientific">Rotavirus A (isolate RVA/Monkey/United States/TUCH/2003/G3P[24])</name>
    <name type="common">RV-A</name>
    <dbReference type="NCBI Taxonomy" id="444186"/>
    <lineage>
        <taxon>Viruses</taxon>
        <taxon>Riboviria</taxon>
        <taxon>Orthornavirae</taxon>
        <taxon>Duplornaviricota</taxon>
        <taxon>Resentoviricetes</taxon>
        <taxon>Reovirales</taxon>
        <taxon>Sedoreoviridae</taxon>
        <taxon>Rotavirus</taxon>
        <taxon>Rotavirus A</taxon>
    </lineage>
</organism>
<dbReference type="EMBL" id="EF583011">
    <property type="protein sequence ID" value="ABQ59573.1"/>
    <property type="molecule type" value="Genomic_RNA"/>
</dbReference>
<dbReference type="SMR" id="B3F2X6"/>
<dbReference type="Proteomes" id="UP000145116">
    <property type="component" value="Genome"/>
</dbReference>
<dbReference type="GO" id="GO:0039616">
    <property type="term" value="C:T=2 icosahedral viral capsid"/>
    <property type="evidence" value="ECO:0007669"/>
    <property type="project" value="UniProtKB-UniRule"/>
</dbReference>
<dbReference type="GO" id="GO:0039625">
    <property type="term" value="C:viral inner capsid"/>
    <property type="evidence" value="ECO:0007669"/>
    <property type="project" value="UniProtKB-UniRule"/>
</dbReference>
<dbReference type="GO" id="GO:0019013">
    <property type="term" value="C:viral nucleocapsid"/>
    <property type="evidence" value="ECO:0007669"/>
    <property type="project" value="UniProtKB-UniRule"/>
</dbReference>
<dbReference type="GO" id="GO:0003723">
    <property type="term" value="F:RNA binding"/>
    <property type="evidence" value="ECO:0007669"/>
    <property type="project" value="UniProtKB-UniRule"/>
</dbReference>
<dbReference type="HAMAP" id="MF_04123">
    <property type="entry name" value="Rota_VP2"/>
    <property type="match status" value="1"/>
</dbReference>
<dbReference type="HAMAP" id="MF_04127">
    <property type="entry name" value="Rota_VP2_A"/>
    <property type="match status" value="1"/>
</dbReference>
<dbReference type="InterPro" id="IPR007779">
    <property type="entry name" value="Rotavirus_VP2"/>
</dbReference>
<dbReference type="Pfam" id="PF05087">
    <property type="entry name" value="Rota_VP2"/>
    <property type="match status" value="1"/>
</dbReference>
<keyword id="KW-0167">Capsid protein</keyword>
<keyword id="KW-1153">Inner capsid protein</keyword>
<keyword id="KW-0677">Repeat</keyword>
<keyword id="KW-0694">RNA-binding</keyword>
<keyword id="KW-1141">T=2 icosahedral capsid protein</keyword>
<keyword id="KW-0832">Ubl conjugation</keyword>
<keyword id="KW-0946">Virion</keyword>
<reference key="1">
    <citation type="submission" date="2007-04" db="EMBL/GenBank/DDBJ databases">
        <authorList>
            <person name="Brown T.L."/>
            <person name="Yang H."/>
            <person name="Patton J.T."/>
        </authorList>
    </citation>
    <scope>NUCLEOTIDE SEQUENCE [GENOMIC RNA]</scope>
</reference>
<organismHost>
    <name type="scientific">Macaca mulatta</name>
    <name type="common">Rhesus macaque</name>
    <dbReference type="NCBI Taxonomy" id="9544"/>
</organismHost>
<proteinExistence type="inferred from homology"/>